<reference key="1">
    <citation type="submission" date="2007-07" db="EMBL/GenBank/DDBJ databases">
        <title>Complete sequence of chromosome of Xanthobacter autotrophicus Py2.</title>
        <authorList>
            <consortium name="US DOE Joint Genome Institute"/>
            <person name="Copeland A."/>
            <person name="Lucas S."/>
            <person name="Lapidus A."/>
            <person name="Barry K."/>
            <person name="Glavina del Rio T."/>
            <person name="Hammon N."/>
            <person name="Israni S."/>
            <person name="Dalin E."/>
            <person name="Tice H."/>
            <person name="Pitluck S."/>
            <person name="Sims D."/>
            <person name="Brettin T."/>
            <person name="Bruce D."/>
            <person name="Detter J.C."/>
            <person name="Han C."/>
            <person name="Tapia R."/>
            <person name="Brainard J."/>
            <person name="Schmutz J."/>
            <person name="Larimer F."/>
            <person name="Land M."/>
            <person name="Hauser L."/>
            <person name="Kyrpides N."/>
            <person name="Kim E."/>
            <person name="Ensigns S.A."/>
            <person name="Richardson P."/>
        </authorList>
    </citation>
    <scope>NUCLEOTIDE SEQUENCE [LARGE SCALE GENOMIC DNA]</scope>
    <source>
        <strain>ATCC BAA-1158 / Py2</strain>
    </source>
</reference>
<keyword id="KW-0963">Cytoplasm</keyword>
<keyword id="KW-0460">Magnesium</keyword>
<keyword id="KW-0479">Metal-binding</keyword>
<keyword id="KW-0566">Pantothenate biosynthesis</keyword>
<keyword id="KW-1185">Reference proteome</keyword>
<keyword id="KW-0808">Transferase</keyword>
<sequence length="280" mass="29873">MSSQADARRITAPQIQARKGGEPIVSLTSYHSHTARLLDRHVDVILVGDSLGMVMHGMETTVPVTVEMMIVHGRAVVRGTKRALIVVDLPFGSYEASHTEAFHTAARVLKETGAGAVKLEGGRRMAETVRFLVDRGVPVMGHVGLTPQAINTLGSFKARGRDDAEASIILDDARAIAEAGAFSIVLEAIAEPLARRITQEVAPPTIGIGGSPACDGQILVLEDMLGLGDRVPKFVKKYANLGPDIEKAVASYADEVRARTFPAAEHTYAPRLVEKPAKAS</sequence>
<gene>
    <name evidence="1" type="primary">panB</name>
    <name type="ordered locus">Xaut_1442</name>
</gene>
<accession>A7IF97</accession>
<protein>
    <recommendedName>
        <fullName evidence="1">3-methyl-2-oxobutanoate hydroxymethyltransferase</fullName>
        <ecNumber evidence="1">2.1.2.11</ecNumber>
    </recommendedName>
    <alternativeName>
        <fullName evidence="1">Ketopantoate hydroxymethyltransferase</fullName>
        <shortName evidence="1">KPHMT</shortName>
    </alternativeName>
</protein>
<feature type="chain" id="PRO_1000097020" description="3-methyl-2-oxobutanoate hydroxymethyltransferase">
    <location>
        <begin position="1"/>
        <end position="280"/>
    </location>
</feature>
<feature type="active site" description="Proton acceptor" evidence="1">
    <location>
        <position position="187"/>
    </location>
</feature>
<feature type="binding site" evidence="1">
    <location>
        <begin position="49"/>
        <end position="50"/>
    </location>
    <ligand>
        <name>3-methyl-2-oxobutanoate</name>
        <dbReference type="ChEBI" id="CHEBI:11851"/>
    </ligand>
</feature>
<feature type="binding site" evidence="1">
    <location>
        <position position="49"/>
    </location>
    <ligand>
        <name>Mg(2+)</name>
        <dbReference type="ChEBI" id="CHEBI:18420"/>
    </ligand>
</feature>
<feature type="binding site" evidence="1">
    <location>
        <position position="88"/>
    </location>
    <ligand>
        <name>3-methyl-2-oxobutanoate</name>
        <dbReference type="ChEBI" id="CHEBI:11851"/>
    </ligand>
</feature>
<feature type="binding site" evidence="1">
    <location>
        <position position="88"/>
    </location>
    <ligand>
        <name>Mg(2+)</name>
        <dbReference type="ChEBI" id="CHEBI:18420"/>
    </ligand>
</feature>
<feature type="binding site" evidence="1">
    <location>
        <position position="118"/>
    </location>
    <ligand>
        <name>3-methyl-2-oxobutanoate</name>
        <dbReference type="ChEBI" id="CHEBI:11851"/>
    </ligand>
</feature>
<feature type="binding site" evidence="1">
    <location>
        <position position="120"/>
    </location>
    <ligand>
        <name>Mg(2+)</name>
        <dbReference type="ChEBI" id="CHEBI:18420"/>
    </ligand>
</feature>
<organism>
    <name type="scientific">Xanthobacter autotrophicus (strain ATCC BAA-1158 / Py2)</name>
    <dbReference type="NCBI Taxonomy" id="78245"/>
    <lineage>
        <taxon>Bacteria</taxon>
        <taxon>Pseudomonadati</taxon>
        <taxon>Pseudomonadota</taxon>
        <taxon>Alphaproteobacteria</taxon>
        <taxon>Hyphomicrobiales</taxon>
        <taxon>Xanthobacteraceae</taxon>
        <taxon>Xanthobacter</taxon>
    </lineage>
</organism>
<dbReference type="EC" id="2.1.2.11" evidence="1"/>
<dbReference type="EMBL" id="CP000781">
    <property type="protein sequence ID" value="ABS66690.1"/>
    <property type="molecule type" value="Genomic_DNA"/>
</dbReference>
<dbReference type="SMR" id="A7IF97"/>
<dbReference type="STRING" id="78245.Xaut_1442"/>
<dbReference type="KEGG" id="xau:Xaut_1442"/>
<dbReference type="eggNOG" id="COG0413">
    <property type="taxonomic scope" value="Bacteria"/>
</dbReference>
<dbReference type="HOGENOM" id="CLU_036645_1_0_5"/>
<dbReference type="OrthoDB" id="9781789at2"/>
<dbReference type="PhylomeDB" id="A7IF97"/>
<dbReference type="UniPathway" id="UPA00028">
    <property type="reaction ID" value="UER00003"/>
</dbReference>
<dbReference type="Proteomes" id="UP000002417">
    <property type="component" value="Chromosome"/>
</dbReference>
<dbReference type="GO" id="GO:0005737">
    <property type="term" value="C:cytoplasm"/>
    <property type="evidence" value="ECO:0007669"/>
    <property type="project" value="UniProtKB-SubCell"/>
</dbReference>
<dbReference type="GO" id="GO:0003864">
    <property type="term" value="F:3-methyl-2-oxobutanoate hydroxymethyltransferase activity"/>
    <property type="evidence" value="ECO:0007669"/>
    <property type="project" value="UniProtKB-UniRule"/>
</dbReference>
<dbReference type="GO" id="GO:0000287">
    <property type="term" value="F:magnesium ion binding"/>
    <property type="evidence" value="ECO:0007669"/>
    <property type="project" value="TreeGrafter"/>
</dbReference>
<dbReference type="GO" id="GO:0015940">
    <property type="term" value="P:pantothenate biosynthetic process"/>
    <property type="evidence" value="ECO:0007669"/>
    <property type="project" value="UniProtKB-UniRule"/>
</dbReference>
<dbReference type="CDD" id="cd06557">
    <property type="entry name" value="KPHMT-like"/>
    <property type="match status" value="1"/>
</dbReference>
<dbReference type="FunFam" id="3.20.20.60:FF:000003">
    <property type="entry name" value="3-methyl-2-oxobutanoate hydroxymethyltransferase"/>
    <property type="match status" value="1"/>
</dbReference>
<dbReference type="Gene3D" id="3.20.20.60">
    <property type="entry name" value="Phosphoenolpyruvate-binding domains"/>
    <property type="match status" value="1"/>
</dbReference>
<dbReference type="HAMAP" id="MF_00156">
    <property type="entry name" value="PanB"/>
    <property type="match status" value="1"/>
</dbReference>
<dbReference type="InterPro" id="IPR003700">
    <property type="entry name" value="Pantoate_hydroxy_MeTrfase"/>
</dbReference>
<dbReference type="InterPro" id="IPR015813">
    <property type="entry name" value="Pyrv/PenolPyrv_kinase-like_dom"/>
</dbReference>
<dbReference type="InterPro" id="IPR040442">
    <property type="entry name" value="Pyrv_kinase-like_dom_sf"/>
</dbReference>
<dbReference type="NCBIfam" id="TIGR00222">
    <property type="entry name" value="panB"/>
    <property type="match status" value="1"/>
</dbReference>
<dbReference type="NCBIfam" id="NF001452">
    <property type="entry name" value="PRK00311.1"/>
    <property type="match status" value="1"/>
</dbReference>
<dbReference type="PANTHER" id="PTHR20881">
    <property type="entry name" value="3-METHYL-2-OXOBUTANOATE HYDROXYMETHYLTRANSFERASE"/>
    <property type="match status" value="1"/>
</dbReference>
<dbReference type="PANTHER" id="PTHR20881:SF0">
    <property type="entry name" value="3-METHYL-2-OXOBUTANOATE HYDROXYMETHYLTRANSFERASE"/>
    <property type="match status" value="1"/>
</dbReference>
<dbReference type="Pfam" id="PF02548">
    <property type="entry name" value="Pantoate_transf"/>
    <property type="match status" value="1"/>
</dbReference>
<dbReference type="PIRSF" id="PIRSF000388">
    <property type="entry name" value="Pantoate_hydroxy_MeTrfase"/>
    <property type="match status" value="1"/>
</dbReference>
<dbReference type="SUPFAM" id="SSF51621">
    <property type="entry name" value="Phosphoenolpyruvate/pyruvate domain"/>
    <property type="match status" value="1"/>
</dbReference>
<comment type="function">
    <text evidence="1">Catalyzes the reversible reaction in which hydroxymethyl group from 5,10-methylenetetrahydrofolate is transferred onto alpha-ketoisovalerate to form ketopantoate.</text>
</comment>
<comment type="catalytic activity">
    <reaction evidence="1">
        <text>3-methyl-2-oxobutanoate + (6R)-5,10-methylene-5,6,7,8-tetrahydrofolate + H2O = 2-dehydropantoate + (6S)-5,6,7,8-tetrahydrofolate</text>
        <dbReference type="Rhea" id="RHEA:11824"/>
        <dbReference type="ChEBI" id="CHEBI:11561"/>
        <dbReference type="ChEBI" id="CHEBI:11851"/>
        <dbReference type="ChEBI" id="CHEBI:15377"/>
        <dbReference type="ChEBI" id="CHEBI:15636"/>
        <dbReference type="ChEBI" id="CHEBI:57453"/>
        <dbReference type="EC" id="2.1.2.11"/>
    </reaction>
</comment>
<comment type="cofactor">
    <cofactor evidence="1">
        <name>Mg(2+)</name>
        <dbReference type="ChEBI" id="CHEBI:18420"/>
    </cofactor>
    <text evidence="1">Binds 1 Mg(2+) ion per subunit.</text>
</comment>
<comment type="pathway">
    <text evidence="1">Cofactor biosynthesis; (R)-pantothenate biosynthesis; (R)-pantoate from 3-methyl-2-oxobutanoate: step 1/2.</text>
</comment>
<comment type="subunit">
    <text evidence="1">Homodecamer; pentamer of dimers.</text>
</comment>
<comment type="subcellular location">
    <subcellularLocation>
        <location evidence="1">Cytoplasm</location>
    </subcellularLocation>
</comment>
<comment type="similarity">
    <text evidence="1">Belongs to the PanB family.</text>
</comment>
<evidence type="ECO:0000255" key="1">
    <source>
        <dbReference type="HAMAP-Rule" id="MF_00156"/>
    </source>
</evidence>
<name>PANB_XANP2</name>
<proteinExistence type="inferred from homology"/>